<comment type="function">
    <text evidence="3">Involved in a high affinity multicomponent binding-protein-dependent transport system for choline; probably responsible for the translocation of the substrate across the membrane.</text>
</comment>
<comment type="subcellular location">
    <subcellularLocation>
        <location evidence="1">Cell membrane</location>
        <topology evidence="2">Multi-pass membrane protein</topology>
    </subcellularLocation>
</comment>
<comment type="induction">
    <text evidence="4">Repressed by GbsR.</text>
</comment>
<comment type="similarity">
    <text evidence="5">Belongs to the binding-protein-dependent transport system permease family. CysTW subfamily.</text>
</comment>
<evidence type="ECO:0000250" key="1"/>
<evidence type="ECO:0000255" key="2">
    <source>
        <dbReference type="PROSITE-ProRule" id="PRU00441"/>
    </source>
</evidence>
<evidence type="ECO:0000269" key="3">
    <source>
    </source>
</evidence>
<evidence type="ECO:0000269" key="4">
    <source>
    </source>
</evidence>
<evidence type="ECO:0000305" key="5"/>
<organism>
    <name type="scientific">Bacillus subtilis (strain 168)</name>
    <dbReference type="NCBI Taxonomy" id="224308"/>
    <lineage>
        <taxon>Bacteria</taxon>
        <taxon>Bacillati</taxon>
        <taxon>Bacillota</taxon>
        <taxon>Bacilli</taxon>
        <taxon>Bacillales</taxon>
        <taxon>Bacillaceae</taxon>
        <taxon>Bacillus</taxon>
    </lineage>
</organism>
<feature type="chain" id="PRO_0000060155" description="Choline transport system permease protein OpuBD">
    <location>
        <begin position="1"/>
        <end position="226"/>
    </location>
</feature>
<feature type="transmembrane region" description="Helical" evidence="2">
    <location>
        <begin position="27"/>
        <end position="47"/>
    </location>
</feature>
<feature type="transmembrane region" description="Helical" evidence="2">
    <location>
        <begin position="52"/>
        <end position="72"/>
    </location>
</feature>
<feature type="transmembrane region" description="Helical" evidence="2">
    <location>
        <begin position="73"/>
        <end position="93"/>
    </location>
</feature>
<feature type="transmembrane region" description="Helical" evidence="2">
    <location>
        <begin position="148"/>
        <end position="168"/>
    </location>
</feature>
<feature type="transmembrane region" description="Helical" evidence="2">
    <location>
        <begin position="182"/>
        <end position="202"/>
    </location>
</feature>
<feature type="domain" description="ABC transmembrane type-1" evidence="2">
    <location>
        <begin position="22"/>
        <end position="202"/>
    </location>
</feature>
<feature type="sequence variant" description="In strain: ATCC 6633 / PCI 219.">
    <original>A</original>
    <variation>V</variation>
    <location>
        <position position="30"/>
    </location>
</feature>
<feature type="sequence variant" description="In strain: ATCC 6633 / PCI 219.">
    <original>A</original>
    <variation>V</variation>
    <location>
        <position position="43"/>
    </location>
</feature>
<feature type="sequence variant" description="In strain: ATCC 6633 / PCI 219.">
    <original>F</original>
    <variation>Y</variation>
    <location>
        <position position="50"/>
    </location>
</feature>
<feature type="sequence variant" description="In strain: ATCC 6633 / PCI 219.">
    <original>L</original>
    <variation>I</variation>
    <location>
        <position position="89"/>
    </location>
</feature>
<feature type="sequence variant" description="In strain: ATCC 6633 / PCI 219.">
    <original>I</original>
    <variation>V</variation>
    <location>
        <position position="108"/>
    </location>
</feature>
<feature type="sequence variant" description="In strain: ATCC 6633 / PCI 219.">
    <original>I</original>
    <variation>T</variation>
    <location>
        <position position="189"/>
    </location>
</feature>
<feature type="sequence variant" description="In strain: ATCC 6633 / PCI 219.">
    <original>V</original>
    <variation>I</variation>
    <location>
        <position position="196"/>
    </location>
</feature>
<feature type="sequence variant" description="In strain: ATCC 6633 / PCI 219.">
    <original>L</original>
    <variation>I</variation>
    <location>
        <position position="201"/>
    </location>
</feature>
<feature type="sequence variant" description="In strain: ATCC 6633 / PCI 219.">
    <original>L</original>
    <variation>I</variation>
    <location>
        <position position="205"/>
    </location>
</feature>
<feature type="sequence conflict" description="In Ref. 1 and 4." evidence="5" ref="1 4">
    <original>ALS</original>
    <variation>FLN</variation>
    <location>
        <begin position="208"/>
        <end position="210"/>
    </location>
</feature>
<feature type="sequence conflict" description="In Ref. 1 and 4." evidence="5" ref="1 4">
    <original>KKRTGAKHVQSAA</original>
    <variation>QKSRRKVISV</variation>
    <location>
        <begin position="214"/>
        <end position="226"/>
    </location>
</feature>
<gene>
    <name type="primary">opuBD</name>
    <name type="synonym">proZ</name>
    <name type="ordered locus">BSU33700</name>
</gene>
<proteinExistence type="evidence at transcript level"/>
<sequence length="226" mass="23928">MNVLEQLMTYYAQNGSYVMDEFGRHFLMSAYGVLFAAVVGVPAGILIAHFRRLSAWVFAVTNVIQTIPALAMLAVLMLVMGLGANTVILSLFLYSLLPIIRNTYTGIISIEHAYLESGKAMGMTKFQVLRMVELPLALSVIMAGLRTALVIAIGITAIGTFVGAGGLGDMIVRGSNATNGTAIILAGAIPTAVMAVGADLLMAWLERALSPVKKKRTGAKHVQSAA</sequence>
<reference key="1">
    <citation type="journal article" date="1995" name="J. Bacteriol.">
        <title>Characterization of a chimeric proU operon in a subtilin-producing mutant of Bacillus subtilis 168.</title>
        <authorList>
            <person name="Lin Y."/>
            <person name="Hansen J.N."/>
        </authorList>
    </citation>
    <scope>NUCLEOTIDE SEQUENCE [GENOMIC DNA]</scope>
    <source>
        <strain>ATCC 6633 / PCI 219 / NRS 231</strain>
    </source>
</reference>
<reference key="2">
    <citation type="journal article" date="1999" name="Mol. Microbiol.">
        <title>Two evolutionarily closely related ABC transporters mediate the uptake of choline for synthesis of the osmoprotectant glycine betaine in Bacillus subtilis.</title>
        <authorList>
            <person name="Kappes R.M."/>
            <person name="Kempf B."/>
            <person name="Kneip S."/>
            <person name="Boch J."/>
            <person name="Gade J."/>
            <person name="Meier-Wagner J."/>
            <person name="Bremer E."/>
        </authorList>
    </citation>
    <scope>NUCLEOTIDE SEQUENCE [GENOMIC DNA]</scope>
    <scope>FUNCTION</scope>
    <source>
        <strain>168 / JH642</strain>
    </source>
</reference>
<reference key="3">
    <citation type="journal article" date="1997" name="Nature">
        <title>The complete genome sequence of the Gram-positive bacterium Bacillus subtilis.</title>
        <authorList>
            <person name="Kunst F."/>
            <person name="Ogasawara N."/>
            <person name="Moszer I."/>
            <person name="Albertini A.M."/>
            <person name="Alloni G."/>
            <person name="Azevedo V."/>
            <person name="Bertero M.G."/>
            <person name="Bessieres P."/>
            <person name="Bolotin A."/>
            <person name="Borchert S."/>
            <person name="Borriss R."/>
            <person name="Boursier L."/>
            <person name="Brans A."/>
            <person name="Braun M."/>
            <person name="Brignell S.C."/>
            <person name="Bron S."/>
            <person name="Brouillet S."/>
            <person name="Bruschi C.V."/>
            <person name="Caldwell B."/>
            <person name="Capuano V."/>
            <person name="Carter N.M."/>
            <person name="Choi S.-K."/>
            <person name="Codani J.-J."/>
            <person name="Connerton I.F."/>
            <person name="Cummings N.J."/>
            <person name="Daniel R.A."/>
            <person name="Denizot F."/>
            <person name="Devine K.M."/>
            <person name="Duesterhoeft A."/>
            <person name="Ehrlich S.D."/>
            <person name="Emmerson P.T."/>
            <person name="Entian K.-D."/>
            <person name="Errington J."/>
            <person name="Fabret C."/>
            <person name="Ferrari E."/>
            <person name="Foulger D."/>
            <person name="Fritz C."/>
            <person name="Fujita M."/>
            <person name="Fujita Y."/>
            <person name="Fuma S."/>
            <person name="Galizzi A."/>
            <person name="Galleron N."/>
            <person name="Ghim S.-Y."/>
            <person name="Glaser P."/>
            <person name="Goffeau A."/>
            <person name="Golightly E.J."/>
            <person name="Grandi G."/>
            <person name="Guiseppi G."/>
            <person name="Guy B.J."/>
            <person name="Haga K."/>
            <person name="Haiech J."/>
            <person name="Harwood C.R."/>
            <person name="Henaut A."/>
            <person name="Hilbert H."/>
            <person name="Holsappel S."/>
            <person name="Hosono S."/>
            <person name="Hullo M.-F."/>
            <person name="Itaya M."/>
            <person name="Jones L.-M."/>
            <person name="Joris B."/>
            <person name="Karamata D."/>
            <person name="Kasahara Y."/>
            <person name="Klaerr-Blanchard M."/>
            <person name="Klein C."/>
            <person name="Kobayashi Y."/>
            <person name="Koetter P."/>
            <person name="Koningstein G."/>
            <person name="Krogh S."/>
            <person name="Kumano M."/>
            <person name="Kurita K."/>
            <person name="Lapidus A."/>
            <person name="Lardinois S."/>
            <person name="Lauber J."/>
            <person name="Lazarevic V."/>
            <person name="Lee S.-M."/>
            <person name="Levine A."/>
            <person name="Liu H."/>
            <person name="Masuda S."/>
            <person name="Mauel C."/>
            <person name="Medigue C."/>
            <person name="Medina N."/>
            <person name="Mellado R.P."/>
            <person name="Mizuno M."/>
            <person name="Moestl D."/>
            <person name="Nakai S."/>
            <person name="Noback M."/>
            <person name="Noone D."/>
            <person name="O'Reilly M."/>
            <person name="Ogawa K."/>
            <person name="Ogiwara A."/>
            <person name="Oudega B."/>
            <person name="Park S.-H."/>
            <person name="Parro V."/>
            <person name="Pohl T.M."/>
            <person name="Portetelle D."/>
            <person name="Porwollik S."/>
            <person name="Prescott A.M."/>
            <person name="Presecan E."/>
            <person name="Pujic P."/>
            <person name="Purnelle B."/>
            <person name="Rapoport G."/>
            <person name="Rey M."/>
            <person name="Reynolds S."/>
            <person name="Rieger M."/>
            <person name="Rivolta C."/>
            <person name="Rocha E."/>
            <person name="Roche B."/>
            <person name="Rose M."/>
            <person name="Sadaie Y."/>
            <person name="Sato T."/>
            <person name="Scanlan E."/>
            <person name="Schleich S."/>
            <person name="Schroeter R."/>
            <person name="Scoffone F."/>
            <person name="Sekiguchi J."/>
            <person name="Sekowska A."/>
            <person name="Seror S.J."/>
            <person name="Serror P."/>
            <person name="Shin B.-S."/>
            <person name="Soldo B."/>
            <person name="Sorokin A."/>
            <person name="Tacconi E."/>
            <person name="Takagi T."/>
            <person name="Takahashi H."/>
            <person name="Takemaru K."/>
            <person name="Takeuchi M."/>
            <person name="Tamakoshi A."/>
            <person name="Tanaka T."/>
            <person name="Terpstra P."/>
            <person name="Tognoni A."/>
            <person name="Tosato V."/>
            <person name="Uchiyama S."/>
            <person name="Vandenbol M."/>
            <person name="Vannier F."/>
            <person name="Vassarotti A."/>
            <person name="Viari A."/>
            <person name="Wambutt R."/>
            <person name="Wedler E."/>
            <person name="Wedler H."/>
            <person name="Weitzenegger T."/>
            <person name="Winters P."/>
            <person name="Wipat A."/>
            <person name="Yamamoto H."/>
            <person name="Yamane K."/>
            <person name="Yasumoto K."/>
            <person name="Yata K."/>
            <person name="Yoshida K."/>
            <person name="Yoshikawa H.-F."/>
            <person name="Zumstein E."/>
            <person name="Yoshikawa H."/>
            <person name="Danchin A."/>
        </authorList>
    </citation>
    <scope>NUCLEOTIDE SEQUENCE [LARGE SCALE GENOMIC DNA]</scope>
    <source>
        <strain>168</strain>
    </source>
</reference>
<reference key="4">
    <citation type="journal article" date="1992" name="J. Bacteriol.">
        <title>Determination of the sequence of spaE and identification of a promoter in the subtilin (spa) operon in Bacillus subtilis.</title>
        <authorList>
            <person name="Chung Y.J."/>
            <person name="Hansen J.N."/>
        </authorList>
    </citation>
    <scope>NUCLEOTIDE SEQUENCE [GENOMIC DNA] OF 21-226</scope>
    <source>
        <strain>ATCC 6633 / PCI 219 / NRS 231</strain>
    </source>
</reference>
<reference key="5">
    <citation type="journal article" date="2012" name="J. Bacteriol.">
        <title>Genetic control of osmoadaptive glycine betaine synthesis in Bacillus subtilis through the choline-sensing and glycine betaine-responsive GbsR repressor.</title>
        <authorList>
            <person name="Nau-Wagner G."/>
            <person name="Opper D."/>
            <person name="Rolbetzki A."/>
            <person name="Boch J."/>
            <person name="Kempf B."/>
            <person name="Hoffmann T."/>
            <person name="Bremer E."/>
        </authorList>
    </citation>
    <scope>INDUCTION</scope>
    <source>
        <strain>168 / JH642</strain>
    </source>
</reference>
<name>OPUBD_BACSU</name>
<keyword id="KW-0029">Amino-acid transport</keyword>
<keyword id="KW-1003">Cell membrane</keyword>
<keyword id="KW-0472">Membrane</keyword>
<keyword id="KW-1185">Reference proteome</keyword>
<keyword id="KW-0812">Transmembrane</keyword>
<keyword id="KW-1133">Transmembrane helix</keyword>
<keyword id="KW-0813">Transport</keyword>
<protein>
    <recommendedName>
        <fullName>Choline transport system permease protein OpuBD</fullName>
    </recommendedName>
</protein>
<dbReference type="EMBL" id="U38418">
    <property type="protein sequence ID" value="AAB01535.1"/>
    <property type="molecule type" value="Genomic_DNA"/>
</dbReference>
<dbReference type="EMBL" id="AF008930">
    <property type="protein sequence ID" value="AAC14359.1"/>
    <property type="molecule type" value="Genomic_DNA"/>
</dbReference>
<dbReference type="EMBL" id="AL009126">
    <property type="protein sequence ID" value="CAB15375.1"/>
    <property type="molecule type" value="Genomic_DNA"/>
</dbReference>
<dbReference type="EMBL" id="M99263">
    <property type="protein sequence ID" value="AAA22773.1"/>
    <property type="molecule type" value="Genomic_DNA"/>
</dbReference>
<dbReference type="PIR" id="B69670">
    <property type="entry name" value="B69670"/>
</dbReference>
<dbReference type="RefSeq" id="NP_391250.1">
    <property type="nucleotide sequence ID" value="NC_000964.3"/>
</dbReference>
<dbReference type="RefSeq" id="WP_003228374.1">
    <property type="nucleotide sequence ID" value="NZ_OZ025638.1"/>
</dbReference>
<dbReference type="SMR" id="P39775"/>
<dbReference type="FunCoup" id="P39775">
    <property type="interactions" value="149"/>
</dbReference>
<dbReference type="STRING" id="224308.BSU33700"/>
<dbReference type="TCDB" id="3.A.1.12.3">
    <property type="family name" value="the atp-binding cassette (abc) superfamily"/>
</dbReference>
<dbReference type="PaxDb" id="224308-BSU33700"/>
<dbReference type="EnsemblBacteria" id="CAB15375">
    <property type="protein sequence ID" value="CAB15375"/>
    <property type="gene ID" value="BSU_33700"/>
</dbReference>
<dbReference type="GeneID" id="936226"/>
<dbReference type="KEGG" id="bsu:BSU33700"/>
<dbReference type="PATRIC" id="fig|224308.179.peg.3655"/>
<dbReference type="eggNOG" id="COG1174">
    <property type="taxonomic scope" value="Bacteria"/>
</dbReference>
<dbReference type="InParanoid" id="P39775"/>
<dbReference type="OrthoDB" id="9801163at2"/>
<dbReference type="PhylomeDB" id="P39775"/>
<dbReference type="BioCyc" id="BSUB:BSU33700-MONOMER"/>
<dbReference type="Proteomes" id="UP000001570">
    <property type="component" value="Chromosome"/>
</dbReference>
<dbReference type="GO" id="GO:0005886">
    <property type="term" value="C:plasma membrane"/>
    <property type="evidence" value="ECO:0000318"/>
    <property type="project" value="GO_Central"/>
</dbReference>
<dbReference type="GO" id="GO:0006865">
    <property type="term" value="P:amino acid transport"/>
    <property type="evidence" value="ECO:0007669"/>
    <property type="project" value="UniProtKB-KW"/>
</dbReference>
<dbReference type="GO" id="GO:0055085">
    <property type="term" value="P:transmembrane transport"/>
    <property type="evidence" value="ECO:0007669"/>
    <property type="project" value="InterPro"/>
</dbReference>
<dbReference type="CDD" id="cd06261">
    <property type="entry name" value="TM_PBP2"/>
    <property type="match status" value="1"/>
</dbReference>
<dbReference type="FunFam" id="1.10.3720.10:FF:000001">
    <property type="entry name" value="Glycine betaine ABC transporter, permease"/>
    <property type="match status" value="1"/>
</dbReference>
<dbReference type="Gene3D" id="1.10.3720.10">
    <property type="entry name" value="MetI-like"/>
    <property type="match status" value="1"/>
</dbReference>
<dbReference type="InterPro" id="IPR051204">
    <property type="entry name" value="ABC_transp_perm/SBD"/>
</dbReference>
<dbReference type="InterPro" id="IPR000515">
    <property type="entry name" value="MetI-like"/>
</dbReference>
<dbReference type="InterPro" id="IPR035906">
    <property type="entry name" value="MetI-like_sf"/>
</dbReference>
<dbReference type="PANTHER" id="PTHR30177">
    <property type="entry name" value="GLYCINE BETAINE/L-PROLINE TRANSPORT SYSTEM PERMEASE PROTEIN PROW"/>
    <property type="match status" value="1"/>
</dbReference>
<dbReference type="PANTHER" id="PTHR30177:SF4">
    <property type="entry name" value="OSMOPROTECTANT IMPORT PERMEASE PROTEIN OSMW"/>
    <property type="match status" value="1"/>
</dbReference>
<dbReference type="Pfam" id="PF00528">
    <property type="entry name" value="BPD_transp_1"/>
    <property type="match status" value="1"/>
</dbReference>
<dbReference type="SUPFAM" id="SSF161098">
    <property type="entry name" value="MetI-like"/>
    <property type="match status" value="1"/>
</dbReference>
<dbReference type="PROSITE" id="PS50928">
    <property type="entry name" value="ABC_TM1"/>
    <property type="match status" value="1"/>
</dbReference>
<accession>P39775</accession>
<accession>O34657</accession>